<name>OTU1_HUMAN</name>
<organism>
    <name type="scientific">Homo sapiens</name>
    <name type="common">Human</name>
    <dbReference type="NCBI Taxonomy" id="9606"/>
    <lineage>
        <taxon>Eukaryota</taxon>
        <taxon>Metazoa</taxon>
        <taxon>Chordata</taxon>
        <taxon>Craniata</taxon>
        <taxon>Vertebrata</taxon>
        <taxon>Euteleostomi</taxon>
        <taxon>Mammalia</taxon>
        <taxon>Eutheria</taxon>
        <taxon>Euarchontoglires</taxon>
        <taxon>Primates</taxon>
        <taxon>Haplorrhini</taxon>
        <taxon>Catarrhini</taxon>
        <taxon>Hominidae</taxon>
        <taxon>Homo</taxon>
    </lineage>
</organism>
<protein>
    <recommendedName>
        <fullName>Ubiquitin thioesterase OTU1</fullName>
        <ecNumber evidence="5 6">3.4.19.12</ecNumber>
    </recommendedName>
    <alternativeName>
        <fullName>DUBA-8</fullName>
    </alternativeName>
    <alternativeName>
        <fullName>HIV-1-induced protease 7</fullName>
        <shortName>HIN-7</shortName>
        <shortName>HsHIN7</shortName>
    </alternativeName>
    <alternativeName>
        <fullName>OTU domain-containing protein 2</fullName>
    </alternativeName>
</protein>
<feature type="chain" id="PRO_0000282356" description="Ubiquitin thioesterase OTU1">
    <location>
        <begin position="1"/>
        <end position="348"/>
    </location>
</feature>
<feature type="domain" description="OTU" evidence="3">
    <location>
        <begin position="149"/>
        <end position="274"/>
    </location>
</feature>
<feature type="zinc finger region" description="C2H2-type" evidence="2">
    <location>
        <begin position="318"/>
        <end position="342"/>
    </location>
</feature>
<feature type="region of interest" description="Disordered" evidence="4">
    <location>
        <begin position="1"/>
        <end position="39"/>
    </location>
</feature>
<feature type="region of interest" description="UBX-like" evidence="10">
    <location>
        <begin position="50"/>
        <end position="128"/>
    </location>
</feature>
<feature type="region of interest" description="Cys-loop" evidence="10">
    <location>
        <begin position="154"/>
        <end position="160"/>
    </location>
</feature>
<feature type="region of interest" description="Variable-loop" evidence="10">
    <location>
        <begin position="213"/>
        <end position="223"/>
    </location>
</feature>
<feature type="region of interest" description="His-loop" evidence="10">
    <location>
        <begin position="263"/>
        <end position="267"/>
    </location>
</feature>
<feature type="region of interest" description="S2 site" evidence="10">
    <location>
        <begin position="291"/>
        <end position="296"/>
    </location>
</feature>
<feature type="compositionally biased region" description="Basic residues" evidence="4">
    <location>
        <begin position="1"/>
        <end position="11"/>
    </location>
</feature>
<feature type="active site" evidence="1">
    <location>
        <position position="157"/>
    </location>
</feature>
<feature type="active site" description="Nucleophile" evidence="10">
    <location>
        <position position="160"/>
    </location>
</feature>
<feature type="active site" evidence="10">
    <location>
        <position position="267"/>
    </location>
</feature>
<feature type="active site" evidence="1">
    <location>
        <position position="342"/>
    </location>
</feature>
<feature type="binding site" evidence="6 11">
    <location>
        <position position="266"/>
    </location>
    <ligand>
        <name>substrate</name>
    </ligand>
</feature>
<feature type="splice variant" id="VSP_024122" description="In isoform 2." evidence="8">
    <original>MFGPAKGRHFGVHPAPGFPGGVSQQAAGTKAGPAGAWPVGSRTDTMWRLRCKAKDGTHVLQ</original>
    <variation>METLHIIYSEAKSFTVE</variation>
    <location>
        <begin position="1"/>
        <end position="61"/>
    </location>
</feature>
<feature type="mutagenesis site" description="Abolishes deubiquitinase activity without affecting interaction with VCP. Specifically blocks a step in the course of dislocation and/or degradation of endoplasmic reticulum-resident proteins destined for proteasomal degradation. Prevents the macroautophagy of damaged lysosome membranes decorated with K48-linked ubiquitin chains." evidence="5 7">
    <original>C</original>
    <variation>S</variation>
    <location>
        <position position="160"/>
    </location>
</feature>
<feature type="mutagenesis site" description="Does not affect activity or specificity. Impairs ability to cleave longer 'Lys-11'-linked ubiquitin chains; when associated with Q-295." evidence="6">
    <original>I</original>
    <variation>Q</variation>
    <location>
        <position position="292"/>
    </location>
</feature>
<feature type="mutagenesis site" description="Does not affect activity or specificity. Impairs ability to cleave longer 'Lys-11'-linked ubiquitin chains; when associated with Q-292." evidence="6">
    <original>V</original>
    <variation>Q</variation>
    <location>
        <position position="295"/>
    </location>
</feature>
<feature type="mutagenesis site" description="Reduced activity toward 'Lys-27'-, 'Lys-29'- and 'Lys-33'-linked ubiquitin without affecting activity toward 'Lys-11'-linked ubiquitin; when associated with A-342." evidence="6">
    <original>H</original>
    <variation>A</variation>
    <location>
        <position position="336"/>
    </location>
</feature>
<feature type="mutagenesis site" description="Reduced activity toward 'Lys-27'-, 'Lys-29'- and 'Lys-33'-linked ubiquitin without affecting activity toward 'Lys-11'-linked ubiquitin; when associated with A-336." evidence="6">
    <original>H</original>
    <variation>A</variation>
    <location>
        <position position="342"/>
    </location>
</feature>
<feature type="sequence conflict" description="In Ref. 5; CAD89975." evidence="9" ref="5">
    <original>R</original>
    <variation>G</variation>
    <location>
        <position position="8"/>
    </location>
</feature>
<feature type="sequence conflict" description="In Ref. 1; BAC87233." evidence="9" ref="1">
    <original>L</original>
    <variation>F</variation>
    <location>
        <position position="90"/>
    </location>
</feature>
<feature type="helix" evidence="12">
    <location>
        <begin position="138"/>
        <end position="140"/>
    </location>
</feature>
<feature type="strand" evidence="12">
    <location>
        <begin position="148"/>
        <end position="151"/>
    </location>
</feature>
<feature type="helix" evidence="12">
    <location>
        <begin position="160"/>
        <end position="169"/>
    </location>
</feature>
<feature type="helix" evidence="13">
    <location>
        <begin position="176"/>
        <end position="178"/>
    </location>
</feature>
<feature type="helix" evidence="12">
    <location>
        <begin position="179"/>
        <end position="192"/>
    </location>
</feature>
<feature type="turn" evidence="12">
    <location>
        <begin position="194"/>
        <end position="196"/>
    </location>
</feature>
<feature type="helix" evidence="12">
    <location>
        <begin position="199"/>
        <end position="202"/>
    </location>
</feature>
<feature type="helix" evidence="12">
    <location>
        <begin position="206"/>
        <end position="213"/>
    </location>
</feature>
<feature type="strand" evidence="12">
    <location>
        <begin position="215"/>
        <end position="217"/>
    </location>
</feature>
<feature type="helix" evidence="12">
    <location>
        <begin position="222"/>
        <end position="232"/>
    </location>
</feature>
<feature type="strand" evidence="12">
    <location>
        <begin position="234"/>
        <end position="240"/>
    </location>
</feature>
<feature type="turn" evidence="12">
    <location>
        <begin position="241"/>
        <end position="244"/>
    </location>
</feature>
<feature type="strand" evidence="12">
    <location>
        <begin position="245"/>
        <end position="249"/>
    </location>
</feature>
<feature type="turn" evidence="12">
    <location>
        <begin position="250"/>
        <end position="252"/>
    </location>
</feature>
<feature type="strand" evidence="12">
    <location>
        <begin position="256"/>
        <end position="263"/>
    </location>
</feature>
<feature type="strand" evidence="12">
    <location>
        <begin position="268"/>
        <end position="274"/>
    </location>
</feature>
<feature type="strand" evidence="12">
    <location>
        <begin position="276"/>
        <end position="280"/>
    </location>
</feature>
<feature type="strand" evidence="14">
    <location>
        <begin position="285"/>
        <end position="287"/>
    </location>
</feature>
<feature type="helix" evidence="12">
    <location>
        <begin position="292"/>
        <end position="308"/>
    </location>
</feature>
<gene>
    <name type="primary">YOD1</name>
    <name type="synonym">DUBA8</name>
    <name type="synonym">HIN7</name>
    <name type="synonym">OTUD2</name>
    <name type="ORF">PRO0907</name>
</gene>
<reference key="1">
    <citation type="journal article" date="2004" name="Nat. Genet.">
        <title>Complete sequencing and characterization of 21,243 full-length human cDNAs.</title>
        <authorList>
            <person name="Ota T."/>
            <person name="Suzuki Y."/>
            <person name="Nishikawa T."/>
            <person name="Otsuki T."/>
            <person name="Sugiyama T."/>
            <person name="Irie R."/>
            <person name="Wakamatsu A."/>
            <person name="Hayashi K."/>
            <person name="Sato H."/>
            <person name="Nagai K."/>
            <person name="Kimura K."/>
            <person name="Makita H."/>
            <person name="Sekine M."/>
            <person name="Obayashi M."/>
            <person name="Nishi T."/>
            <person name="Shibahara T."/>
            <person name="Tanaka T."/>
            <person name="Ishii S."/>
            <person name="Yamamoto J."/>
            <person name="Saito K."/>
            <person name="Kawai Y."/>
            <person name="Isono Y."/>
            <person name="Nakamura Y."/>
            <person name="Nagahari K."/>
            <person name="Murakami K."/>
            <person name="Yasuda T."/>
            <person name="Iwayanagi T."/>
            <person name="Wagatsuma M."/>
            <person name="Shiratori A."/>
            <person name="Sudo H."/>
            <person name="Hosoiri T."/>
            <person name="Kaku Y."/>
            <person name="Kodaira H."/>
            <person name="Kondo H."/>
            <person name="Sugawara M."/>
            <person name="Takahashi M."/>
            <person name="Kanda K."/>
            <person name="Yokoi T."/>
            <person name="Furuya T."/>
            <person name="Kikkawa E."/>
            <person name="Omura Y."/>
            <person name="Abe K."/>
            <person name="Kamihara K."/>
            <person name="Katsuta N."/>
            <person name="Sato K."/>
            <person name="Tanikawa M."/>
            <person name="Yamazaki M."/>
            <person name="Ninomiya K."/>
            <person name="Ishibashi T."/>
            <person name="Yamashita H."/>
            <person name="Murakawa K."/>
            <person name="Fujimori K."/>
            <person name="Tanai H."/>
            <person name="Kimata M."/>
            <person name="Watanabe M."/>
            <person name="Hiraoka S."/>
            <person name="Chiba Y."/>
            <person name="Ishida S."/>
            <person name="Ono Y."/>
            <person name="Takiguchi S."/>
            <person name="Watanabe S."/>
            <person name="Yosida M."/>
            <person name="Hotuta T."/>
            <person name="Kusano J."/>
            <person name="Kanehori K."/>
            <person name="Takahashi-Fujii A."/>
            <person name="Hara H."/>
            <person name="Tanase T.-O."/>
            <person name="Nomura Y."/>
            <person name="Togiya S."/>
            <person name="Komai F."/>
            <person name="Hara R."/>
            <person name="Takeuchi K."/>
            <person name="Arita M."/>
            <person name="Imose N."/>
            <person name="Musashino K."/>
            <person name="Yuuki H."/>
            <person name="Oshima A."/>
            <person name="Sasaki N."/>
            <person name="Aotsuka S."/>
            <person name="Yoshikawa Y."/>
            <person name="Matsunawa H."/>
            <person name="Ichihara T."/>
            <person name="Shiohata N."/>
            <person name="Sano S."/>
            <person name="Moriya S."/>
            <person name="Momiyama H."/>
            <person name="Satoh N."/>
            <person name="Takami S."/>
            <person name="Terashima Y."/>
            <person name="Suzuki O."/>
            <person name="Nakagawa S."/>
            <person name="Senoh A."/>
            <person name="Mizoguchi H."/>
            <person name="Goto Y."/>
            <person name="Shimizu F."/>
            <person name="Wakebe H."/>
            <person name="Hishigaki H."/>
            <person name="Watanabe T."/>
            <person name="Sugiyama A."/>
            <person name="Takemoto M."/>
            <person name="Kawakami B."/>
            <person name="Yamazaki M."/>
            <person name="Watanabe K."/>
            <person name="Kumagai A."/>
            <person name="Itakura S."/>
            <person name="Fukuzumi Y."/>
            <person name="Fujimori Y."/>
            <person name="Komiyama M."/>
            <person name="Tashiro H."/>
            <person name="Tanigami A."/>
            <person name="Fujiwara T."/>
            <person name="Ono T."/>
            <person name="Yamada K."/>
            <person name="Fujii Y."/>
            <person name="Ozaki K."/>
            <person name="Hirao M."/>
            <person name="Ohmori Y."/>
            <person name="Kawabata A."/>
            <person name="Hikiji T."/>
            <person name="Kobatake N."/>
            <person name="Inagaki H."/>
            <person name="Ikema Y."/>
            <person name="Okamoto S."/>
            <person name="Okitani R."/>
            <person name="Kawakami T."/>
            <person name="Noguchi S."/>
            <person name="Itoh T."/>
            <person name="Shigeta K."/>
            <person name="Senba T."/>
            <person name="Matsumura K."/>
            <person name="Nakajima Y."/>
            <person name="Mizuno T."/>
            <person name="Morinaga M."/>
            <person name="Sasaki M."/>
            <person name="Togashi T."/>
            <person name="Oyama M."/>
            <person name="Hata H."/>
            <person name="Watanabe M."/>
            <person name="Komatsu T."/>
            <person name="Mizushima-Sugano J."/>
            <person name="Satoh T."/>
            <person name="Shirai Y."/>
            <person name="Takahashi Y."/>
            <person name="Nakagawa K."/>
            <person name="Okumura K."/>
            <person name="Nagase T."/>
            <person name="Nomura N."/>
            <person name="Kikuchi H."/>
            <person name="Masuho Y."/>
            <person name="Yamashita R."/>
            <person name="Nakai K."/>
            <person name="Yada T."/>
            <person name="Nakamura Y."/>
            <person name="Ohara O."/>
            <person name="Isogai T."/>
            <person name="Sugano S."/>
        </authorList>
    </citation>
    <scope>NUCLEOTIDE SEQUENCE [LARGE SCALE MRNA] (ISOFORM 2)</scope>
    <source>
        <tissue>Testis</tissue>
    </source>
</reference>
<reference key="2">
    <citation type="journal article" date="2006" name="Nature">
        <title>The DNA sequence and biological annotation of human chromosome 1.</title>
        <authorList>
            <person name="Gregory S.G."/>
            <person name="Barlow K.F."/>
            <person name="McLay K.E."/>
            <person name="Kaul R."/>
            <person name="Swarbreck D."/>
            <person name="Dunham A."/>
            <person name="Scott C.E."/>
            <person name="Howe K.L."/>
            <person name="Woodfine K."/>
            <person name="Spencer C.C.A."/>
            <person name="Jones M.C."/>
            <person name="Gillson C."/>
            <person name="Searle S."/>
            <person name="Zhou Y."/>
            <person name="Kokocinski F."/>
            <person name="McDonald L."/>
            <person name="Evans R."/>
            <person name="Phillips K."/>
            <person name="Atkinson A."/>
            <person name="Cooper R."/>
            <person name="Jones C."/>
            <person name="Hall R.E."/>
            <person name="Andrews T.D."/>
            <person name="Lloyd C."/>
            <person name="Ainscough R."/>
            <person name="Almeida J.P."/>
            <person name="Ambrose K.D."/>
            <person name="Anderson F."/>
            <person name="Andrew R.W."/>
            <person name="Ashwell R.I.S."/>
            <person name="Aubin K."/>
            <person name="Babbage A.K."/>
            <person name="Bagguley C.L."/>
            <person name="Bailey J."/>
            <person name="Beasley H."/>
            <person name="Bethel G."/>
            <person name="Bird C.P."/>
            <person name="Bray-Allen S."/>
            <person name="Brown J.Y."/>
            <person name="Brown A.J."/>
            <person name="Buckley D."/>
            <person name="Burton J."/>
            <person name="Bye J."/>
            <person name="Carder C."/>
            <person name="Chapman J.C."/>
            <person name="Clark S.Y."/>
            <person name="Clarke G."/>
            <person name="Clee C."/>
            <person name="Cobley V."/>
            <person name="Collier R.E."/>
            <person name="Corby N."/>
            <person name="Coville G.J."/>
            <person name="Davies J."/>
            <person name="Deadman R."/>
            <person name="Dunn M."/>
            <person name="Earthrowl M."/>
            <person name="Ellington A.G."/>
            <person name="Errington H."/>
            <person name="Frankish A."/>
            <person name="Frankland J."/>
            <person name="French L."/>
            <person name="Garner P."/>
            <person name="Garnett J."/>
            <person name="Gay L."/>
            <person name="Ghori M.R.J."/>
            <person name="Gibson R."/>
            <person name="Gilby L.M."/>
            <person name="Gillett W."/>
            <person name="Glithero R.J."/>
            <person name="Grafham D.V."/>
            <person name="Griffiths C."/>
            <person name="Griffiths-Jones S."/>
            <person name="Grocock R."/>
            <person name="Hammond S."/>
            <person name="Harrison E.S.I."/>
            <person name="Hart E."/>
            <person name="Haugen E."/>
            <person name="Heath P.D."/>
            <person name="Holmes S."/>
            <person name="Holt K."/>
            <person name="Howden P.J."/>
            <person name="Hunt A.R."/>
            <person name="Hunt S.E."/>
            <person name="Hunter G."/>
            <person name="Isherwood J."/>
            <person name="James R."/>
            <person name="Johnson C."/>
            <person name="Johnson D."/>
            <person name="Joy A."/>
            <person name="Kay M."/>
            <person name="Kershaw J.K."/>
            <person name="Kibukawa M."/>
            <person name="Kimberley A.M."/>
            <person name="King A."/>
            <person name="Knights A.J."/>
            <person name="Lad H."/>
            <person name="Laird G."/>
            <person name="Lawlor S."/>
            <person name="Leongamornlert D.A."/>
            <person name="Lloyd D.M."/>
            <person name="Loveland J."/>
            <person name="Lovell J."/>
            <person name="Lush M.J."/>
            <person name="Lyne R."/>
            <person name="Martin S."/>
            <person name="Mashreghi-Mohammadi M."/>
            <person name="Matthews L."/>
            <person name="Matthews N.S.W."/>
            <person name="McLaren S."/>
            <person name="Milne S."/>
            <person name="Mistry S."/>
            <person name="Moore M.J.F."/>
            <person name="Nickerson T."/>
            <person name="O'Dell C.N."/>
            <person name="Oliver K."/>
            <person name="Palmeiri A."/>
            <person name="Palmer S.A."/>
            <person name="Parker A."/>
            <person name="Patel D."/>
            <person name="Pearce A.V."/>
            <person name="Peck A.I."/>
            <person name="Pelan S."/>
            <person name="Phelps K."/>
            <person name="Phillimore B.J."/>
            <person name="Plumb R."/>
            <person name="Rajan J."/>
            <person name="Raymond C."/>
            <person name="Rouse G."/>
            <person name="Saenphimmachak C."/>
            <person name="Sehra H.K."/>
            <person name="Sheridan E."/>
            <person name="Shownkeen R."/>
            <person name="Sims S."/>
            <person name="Skuce C.D."/>
            <person name="Smith M."/>
            <person name="Steward C."/>
            <person name="Subramanian S."/>
            <person name="Sycamore N."/>
            <person name="Tracey A."/>
            <person name="Tromans A."/>
            <person name="Van Helmond Z."/>
            <person name="Wall M."/>
            <person name="Wallis J.M."/>
            <person name="White S."/>
            <person name="Whitehead S.L."/>
            <person name="Wilkinson J.E."/>
            <person name="Willey D.L."/>
            <person name="Williams H."/>
            <person name="Wilming L."/>
            <person name="Wray P.W."/>
            <person name="Wu Z."/>
            <person name="Coulson A."/>
            <person name="Vaudin M."/>
            <person name="Sulston J.E."/>
            <person name="Durbin R.M."/>
            <person name="Hubbard T."/>
            <person name="Wooster R."/>
            <person name="Dunham I."/>
            <person name="Carter N.P."/>
            <person name="McVean G."/>
            <person name="Ross M.T."/>
            <person name="Harrow J."/>
            <person name="Olson M.V."/>
            <person name="Beck S."/>
            <person name="Rogers J."/>
            <person name="Bentley D.R."/>
        </authorList>
    </citation>
    <scope>NUCLEOTIDE SEQUENCE [LARGE SCALE GENOMIC DNA]</scope>
</reference>
<reference key="3">
    <citation type="submission" date="2005-09" db="EMBL/GenBank/DDBJ databases">
        <authorList>
            <person name="Mural R.J."/>
            <person name="Istrail S."/>
            <person name="Sutton G.G."/>
            <person name="Florea L."/>
            <person name="Halpern A.L."/>
            <person name="Mobarry C.M."/>
            <person name="Lippert R."/>
            <person name="Walenz B."/>
            <person name="Shatkay H."/>
            <person name="Dew I."/>
            <person name="Miller J.R."/>
            <person name="Flanigan M.J."/>
            <person name="Edwards N.J."/>
            <person name="Bolanos R."/>
            <person name="Fasulo D."/>
            <person name="Halldorsson B.V."/>
            <person name="Hannenhalli S."/>
            <person name="Turner R."/>
            <person name="Yooseph S."/>
            <person name="Lu F."/>
            <person name="Nusskern D.R."/>
            <person name="Shue B.C."/>
            <person name="Zheng X.H."/>
            <person name="Zhong F."/>
            <person name="Delcher A.L."/>
            <person name="Huson D.H."/>
            <person name="Kravitz S.A."/>
            <person name="Mouchard L."/>
            <person name="Reinert K."/>
            <person name="Remington K.A."/>
            <person name="Clark A.G."/>
            <person name="Waterman M.S."/>
            <person name="Eichler E.E."/>
            <person name="Adams M.D."/>
            <person name="Hunkapiller M.W."/>
            <person name="Myers E.W."/>
            <person name="Venter J.C."/>
        </authorList>
    </citation>
    <scope>NUCLEOTIDE SEQUENCE [LARGE SCALE GENOMIC DNA]</scope>
</reference>
<reference key="4">
    <citation type="journal article" date="2004" name="Genome Res.">
        <title>The status, quality, and expansion of the NIH full-length cDNA project: the Mammalian Gene Collection (MGC).</title>
        <authorList>
            <consortium name="The MGC Project Team"/>
        </authorList>
    </citation>
    <scope>NUCLEOTIDE SEQUENCE [LARGE SCALE MRNA] (ISOFORM 1)</scope>
    <source>
        <tissue>Brain</tissue>
        <tissue>Testis</tissue>
    </source>
</reference>
<reference key="5">
    <citation type="journal article" date="2007" name="BMC Genomics">
        <title>The full-ORF clone resource of the German cDNA consortium.</title>
        <authorList>
            <person name="Bechtel S."/>
            <person name="Rosenfelder H."/>
            <person name="Duda A."/>
            <person name="Schmidt C.P."/>
            <person name="Ernst U."/>
            <person name="Wellenreuther R."/>
            <person name="Mehrle A."/>
            <person name="Schuster C."/>
            <person name="Bahr A."/>
            <person name="Bloecker H."/>
            <person name="Heubner D."/>
            <person name="Hoerlein A."/>
            <person name="Michel G."/>
            <person name="Wedler H."/>
            <person name="Koehrer K."/>
            <person name="Ottenwaelder B."/>
            <person name="Poustka A."/>
            <person name="Wiemann S."/>
            <person name="Schupp I."/>
        </authorList>
    </citation>
    <scope>NUCLEOTIDE SEQUENCE [LARGE SCALE MRNA] OF 8-348</scope>
    <source>
        <tissue>Spinal cord</tissue>
    </source>
</reference>
<reference key="6">
    <citation type="journal article" date="2001" name="Genome Res.">
        <title>Gene expression profiling in human fetal liver and identification of tissue- and developmental-stage-specific genes through compiled expression profiles and efficient cloning of full-length cDNAs.</title>
        <authorList>
            <person name="Yu Y."/>
            <person name="Zhang C."/>
            <person name="Zhou G."/>
            <person name="Wu S."/>
            <person name="Qu X."/>
            <person name="Wei H."/>
            <person name="Xing G."/>
            <person name="Dong C."/>
            <person name="Zhai Y."/>
            <person name="Wan J."/>
            <person name="Ouyang S."/>
            <person name="Li L."/>
            <person name="Zhang S."/>
            <person name="Zhou K."/>
            <person name="Zhang Y."/>
            <person name="Wu C."/>
            <person name="He F."/>
        </authorList>
    </citation>
    <scope>NUCLEOTIDE SEQUENCE [LARGE SCALE MRNA] OF 267-348</scope>
    <source>
        <tissue>Fetal liver</tissue>
    </source>
</reference>
<reference key="7">
    <citation type="journal article" date="2009" name="Mol. Cell">
        <title>The otubain YOD1 is a deubiquitinating enzyme that associates with p97 to facilitate protein dislocation from the ER.</title>
        <authorList>
            <person name="Ernst R."/>
            <person name="Mueller B."/>
            <person name="Ploegh H.L."/>
            <person name="Schlieker C."/>
        </authorList>
    </citation>
    <scope>FUNCTION</scope>
    <scope>ENZYME ACTIVITY</scope>
    <scope>INTERACTION WITH FAF2; DERL1 AND VCP</scope>
    <scope>MUTAGENESIS OF CYS-160</scope>
</reference>
<reference key="8">
    <citation type="journal article" date="2011" name="BMC Syst. Biol.">
        <title>Initial characterization of the human central proteome.</title>
        <authorList>
            <person name="Burkard T.R."/>
            <person name="Planyavsky M."/>
            <person name="Kaupe I."/>
            <person name="Breitwieser F.P."/>
            <person name="Buerckstuemmer T."/>
            <person name="Bennett K.L."/>
            <person name="Superti-Furga G."/>
            <person name="Colinge J."/>
        </authorList>
    </citation>
    <scope>IDENTIFICATION BY MASS SPECTROMETRY [LARGE SCALE ANALYSIS]</scope>
</reference>
<reference key="9">
    <citation type="journal article" date="2017" name="EMBO J.">
        <title>VCP/p97 cooperates with YOD1, UBXD1 and PLAA to drive clearance of ruptured lysosomes by autophagy.</title>
        <authorList>
            <person name="Papadopoulos C."/>
            <person name="Kirchner P."/>
            <person name="Bug M."/>
            <person name="Grum D."/>
            <person name="Koerver L."/>
            <person name="Schulze N."/>
            <person name="Poehler R."/>
            <person name="Dressler A."/>
            <person name="Fengler S."/>
            <person name="Arhzaouy K."/>
            <person name="Lux V."/>
            <person name="Ehrmann M."/>
            <person name="Weihl C.C."/>
            <person name="Meyer H."/>
        </authorList>
    </citation>
    <scope>FUNCTION</scope>
    <scope>INTERACTION WITH PLAA; UBXN6 AND VCP</scope>
    <scope>SUBCELLULAR LOCATION</scope>
    <scope>MUTAGENESIS OF CYS-160</scope>
</reference>
<reference key="10">
    <citation type="journal article" date="2013" name="Cell">
        <title>OTU deubiquitinases reveal mechanisms of linkage specificity and enable ubiquitin chain restriction analysis.</title>
        <authorList>
            <person name="Mevissen T.E."/>
            <person name="Hospenthal M.K."/>
            <person name="Geurink P.P."/>
            <person name="Elliott P.R."/>
            <person name="Akutsu M."/>
            <person name="Arnaudo N."/>
            <person name="Ekkebus R."/>
            <person name="Kulathu Y."/>
            <person name="Wauer T."/>
            <person name="El Oualid F."/>
            <person name="Freund S.M."/>
            <person name="Ovaa H."/>
            <person name="Komander D."/>
        </authorList>
    </citation>
    <scope>X-RAY CRYSTALLOGRAPHY (1.47 ANGSTROMS) OF 132-314 IN COMPLEX WITH UBIQUITINATED SUBSTRATE</scope>
    <scope>FUNCTION</scope>
    <scope>CATALYTIC ACTIVITY</scope>
    <scope>MUTAGENESIS OF ILE-292; VAL-295; HIS-336 AND HIS-342</scope>
</reference>
<evidence type="ECO:0000250" key="1">
    <source>
        <dbReference type="UniProtKB" id="Q96FW1"/>
    </source>
</evidence>
<evidence type="ECO:0000255" key="2">
    <source>
        <dbReference type="PROSITE-ProRule" id="PRU00042"/>
    </source>
</evidence>
<evidence type="ECO:0000255" key="3">
    <source>
        <dbReference type="PROSITE-ProRule" id="PRU00139"/>
    </source>
</evidence>
<evidence type="ECO:0000256" key="4">
    <source>
        <dbReference type="SAM" id="MobiDB-lite"/>
    </source>
</evidence>
<evidence type="ECO:0000269" key="5">
    <source>
    </source>
</evidence>
<evidence type="ECO:0000269" key="6">
    <source>
    </source>
</evidence>
<evidence type="ECO:0000269" key="7">
    <source>
    </source>
</evidence>
<evidence type="ECO:0000303" key="8">
    <source>
    </source>
</evidence>
<evidence type="ECO:0000305" key="9"/>
<evidence type="ECO:0000305" key="10">
    <source>
    </source>
</evidence>
<evidence type="ECO:0007744" key="11">
    <source>
        <dbReference type="PDB" id="4BOS"/>
    </source>
</evidence>
<evidence type="ECO:0007829" key="12">
    <source>
        <dbReference type="PDB" id="4BOQ"/>
    </source>
</evidence>
<evidence type="ECO:0007829" key="13">
    <source>
        <dbReference type="PDB" id="4BOS"/>
    </source>
</evidence>
<evidence type="ECO:0007829" key="14">
    <source>
        <dbReference type="PDB" id="4BOZ"/>
    </source>
</evidence>
<dbReference type="EC" id="3.4.19.12" evidence="5 6"/>
<dbReference type="EMBL" id="AK128014">
    <property type="protein sequence ID" value="BAC87233.1"/>
    <property type="molecule type" value="mRNA"/>
</dbReference>
<dbReference type="EMBL" id="AL445493">
    <property type="status" value="NOT_ANNOTATED_CDS"/>
    <property type="molecule type" value="Genomic_DNA"/>
</dbReference>
<dbReference type="EMBL" id="CH471100">
    <property type="protein sequence ID" value="EAW93509.1"/>
    <property type="molecule type" value="Genomic_DNA"/>
</dbReference>
<dbReference type="EMBL" id="CH471100">
    <property type="protein sequence ID" value="EAW93510.1"/>
    <property type="status" value="ALT_SEQ"/>
    <property type="molecule type" value="Genomic_DNA"/>
</dbReference>
<dbReference type="EMBL" id="BC137166">
    <property type="protein sequence ID" value="AAI37167.1"/>
    <property type="molecule type" value="mRNA"/>
</dbReference>
<dbReference type="EMBL" id="BC137167">
    <property type="protein sequence ID" value="AAI37168.1"/>
    <property type="molecule type" value="mRNA"/>
</dbReference>
<dbReference type="EMBL" id="AL833081">
    <property type="protein sequence ID" value="CAD89975.1"/>
    <property type="molecule type" value="mRNA"/>
</dbReference>
<dbReference type="EMBL" id="AF116608">
    <property type="protein sequence ID" value="AAF71033.1"/>
    <property type="status" value="ALT_SEQ"/>
    <property type="molecule type" value="mRNA"/>
</dbReference>
<dbReference type="CCDS" id="CCDS31002.1">
    <molecule id="Q5VVQ6-1"/>
</dbReference>
<dbReference type="CCDS" id="CCDS60402.1">
    <molecule id="Q5VVQ6-2"/>
</dbReference>
<dbReference type="RefSeq" id="NP_001263249.1">
    <molecule id="Q5VVQ6-2"/>
    <property type="nucleotide sequence ID" value="NM_001276320.2"/>
</dbReference>
<dbReference type="RefSeq" id="NP_061036.3">
    <molecule id="Q5VVQ6-1"/>
    <property type="nucleotide sequence ID" value="NM_018566.3"/>
</dbReference>
<dbReference type="RefSeq" id="XP_047280403.1">
    <molecule id="Q5VVQ6-2"/>
    <property type="nucleotide sequence ID" value="XM_047424447.1"/>
</dbReference>
<dbReference type="RefSeq" id="XP_054193502.1">
    <molecule id="Q5VVQ6-2"/>
    <property type="nucleotide sequence ID" value="XM_054337527.1"/>
</dbReference>
<dbReference type="PDB" id="4BOQ">
    <property type="method" value="X-ray"/>
    <property type="resolution" value="1.47 A"/>
    <property type="chains" value="A=132-314"/>
</dbReference>
<dbReference type="PDB" id="4BOS">
    <property type="method" value="X-ray"/>
    <property type="resolution" value="2.35 A"/>
    <property type="chains" value="A/B=147-314"/>
</dbReference>
<dbReference type="PDB" id="4BOZ">
    <property type="method" value="X-ray"/>
    <property type="resolution" value="3.03 A"/>
    <property type="chains" value="A/D=132-314"/>
</dbReference>
<dbReference type="PDBsum" id="4BOQ"/>
<dbReference type="PDBsum" id="4BOS"/>
<dbReference type="PDBsum" id="4BOZ"/>
<dbReference type="SMR" id="Q5VVQ6"/>
<dbReference type="BioGRID" id="120666">
    <property type="interactions" value="528"/>
</dbReference>
<dbReference type="FunCoup" id="Q5VVQ6">
    <property type="interactions" value="1887"/>
</dbReference>
<dbReference type="IntAct" id="Q5VVQ6">
    <property type="interactions" value="40"/>
</dbReference>
<dbReference type="STRING" id="9606.ENSP00000326813"/>
<dbReference type="BindingDB" id="Q5VVQ6"/>
<dbReference type="ChEMBL" id="CHEMBL4630833"/>
<dbReference type="MEROPS" id="C85.007"/>
<dbReference type="iPTMnet" id="Q5VVQ6"/>
<dbReference type="PhosphoSitePlus" id="Q5VVQ6"/>
<dbReference type="BioMuta" id="YOD1"/>
<dbReference type="DMDM" id="74747276"/>
<dbReference type="jPOST" id="Q5VVQ6"/>
<dbReference type="MassIVE" id="Q5VVQ6"/>
<dbReference type="PaxDb" id="9606-ENSP00000326813"/>
<dbReference type="PeptideAtlas" id="Q5VVQ6"/>
<dbReference type="ProteomicsDB" id="65481">
    <molecule id="Q5VVQ6-1"/>
</dbReference>
<dbReference type="ProteomicsDB" id="65482">
    <molecule id="Q5VVQ6-2"/>
</dbReference>
<dbReference type="Antibodypedia" id="34591">
    <property type="antibodies" value="163 antibodies from 27 providers"/>
</dbReference>
<dbReference type="DNASU" id="55432"/>
<dbReference type="Ensembl" id="ENST00000315927.9">
    <molecule id="Q5VVQ6-1"/>
    <property type="protein sequence ID" value="ENSP00000326813.4"/>
    <property type="gene ID" value="ENSG00000180667.11"/>
</dbReference>
<dbReference type="Ensembl" id="ENST00000367084.1">
    <molecule id="Q5VVQ6-2"/>
    <property type="protein sequence ID" value="ENSP00000356051.1"/>
    <property type="gene ID" value="ENSG00000180667.11"/>
</dbReference>
<dbReference type="GeneID" id="55432"/>
<dbReference type="KEGG" id="hsa:55432"/>
<dbReference type="MANE-Select" id="ENST00000315927.9">
    <property type="protein sequence ID" value="ENSP00000326813.4"/>
    <property type="RefSeq nucleotide sequence ID" value="NM_018566.4"/>
    <property type="RefSeq protein sequence ID" value="NP_061036.3"/>
</dbReference>
<dbReference type="UCSC" id="uc001hfe.1">
    <molecule id="Q5VVQ6-1"/>
    <property type="organism name" value="human"/>
</dbReference>
<dbReference type="AGR" id="HGNC:25035"/>
<dbReference type="CTD" id="55432"/>
<dbReference type="DisGeNET" id="55432"/>
<dbReference type="GeneCards" id="YOD1"/>
<dbReference type="HGNC" id="HGNC:25035">
    <property type="gene designation" value="YOD1"/>
</dbReference>
<dbReference type="HPA" id="ENSG00000180667">
    <property type="expression patterns" value="Tissue enhanced (bone)"/>
</dbReference>
<dbReference type="MIM" id="612023">
    <property type="type" value="gene"/>
</dbReference>
<dbReference type="neXtProt" id="NX_Q5VVQ6"/>
<dbReference type="OpenTargets" id="ENSG00000180667"/>
<dbReference type="PharmGKB" id="PA142670552"/>
<dbReference type="VEuPathDB" id="HostDB:ENSG00000180667"/>
<dbReference type="eggNOG" id="KOG3288">
    <property type="taxonomic scope" value="Eukaryota"/>
</dbReference>
<dbReference type="GeneTree" id="ENSGT00390000009989"/>
<dbReference type="HOGENOM" id="CLU_049327_1_0_1"/>
<dbReference type="InParanoid" id="Q5VVQ6"/>
<dbReference type="OMA" id="TRCILVY"/>
<dbReference type="OrthoDB" id="65596at2759"/>
<dbReference type="PAN-GO" id="Q5VVQ6">
    <property type="GO annotations" value="4 GO annotations based on evolutionary models"/>
</dbReference>
<dbReference type="PhylomeDB" id="Q5VVQ6"/>
<dbReference type="TreeFam" id="TF323700"/>
<dbReference type="BRENDA" id="3.4.19.12">
    <property type="organism ID" value="2681"/>
</dbReference>
<dbReference type="PathwayCommons" id="Q5VVQ6"/>
<dbReference type="Reactome" id="R-HSA-5689896">
    <property type="pathway name" value="Ovarian tumor domain proteases"/>
</dbReference>
<dbReference type="SignaLink" id="Q5VVQ6"/>
<dbReference type="BioGRID-ORCS" id="55432">
    <property type="hits" value="4 hits in 1194 CRISPR screens"/>
</dbReference>
<dbReference type="ChiTaRS" id="YOD1">
    <property type="organism name" value="human"/>
</dbReference>
<dbReference type="EvolutionaryTrace" id="Q5VVQ6"/>
<dbReference type="GenomeRNAi" id="55432"/>
<dbReference type="Pharos" id="Q5VVQ6">
    <property type="development level" value="Tbio"/>
</dbReference>
<dbReference type="PRO" id="PR:Q5VVQ6"/>
<dbReference type="Proteomes" id="UP000005640">
    <property type="component" value="Chromosome 1"/>
</dbReference>
<dbReference type="RNAct" id="Q5VVQ6">
    <property type="molecule type" value="protein"/>
</dbReference>
<dbReference type="Bgee" id="ENSG00000180667">
    <property type="expression patterns" value="Expressed in amniotic fluid and 180 other cell types or tissues"/>
</dbReference>
<dbReference type="GO" id="GO:0005737">
    <property type="term" value="C:cytoplasm"/>
    <property type="evidence" value="ECO:0000314"/>
    <property type="project" value="UniProtKB"/>
</dbReference>
<dbReference type="GO" id="GO:0005829">
    <property type="term" value="C:cytosol"/>
    <property type="evidence" value="ECO:0000304"/>
    <property type="project" value="Reactome"/>
</dbReference>
<dbReference type="GO" id="GO:0004843">
    <property type="term" value="F:cysteine-type deubiquitinase activity"/>
    <property type="evidence" value="ECO:0000314"/>
    <property type="project" value="UniProtKB"/>
</dbReference>
<dbReference type="GO" id="GO:0101005">
    <property type="term" value="F:deubiquitinase activity"/>
    <property type="evidence" value="ECO:0000304"/>
    <property type="project" value="ParkinsonsUK-UCL"/>
</dbReference>
<dbReference type="GO" id="GO:1990380">
    <property type="term" value="F:K48-linked deubiquitinase activity"/>
    <property type="evidence" value="ECO:0000314"/>
    <property type="project" value="ParkinsonsUK-UCL"/>
</dbReference>
<dbReference type="GO" id="GO:0061578">
    <property type="term" value="F:K63-linked deubiquitinase activity"/>
    <property type="evidence" value="ECO:0000304"/>
    <property type="project" value="ParkinsonsUK-UCL"/>
</dbReference>
<dbReference type="GO" id="GO:0031625">
    <property type="term" value="F:ubiquitin protein ligase binding"/>
    <property type="evidence" value="ECO:0000353"/>
    <property type="project" value="ParkinsonsUK-UCL"/>
</dbReference>
<dbReference type="GO" id="GO:0008270">
    <property type="term" value="F:zinc ion binding"/>
    <property type="evidence" value="ECO:0007669"/>
    <property type="project" value="UniProtKB-KW"/>
</dbReference>
<dbReference type="GO" id="GO:0030968">
    <property type="term" value="P:endoplasmic reticulum unfolded protein response"/>
    <property type="evidence" value="ECO:0000315"/>
    <property type="project" value="UniProtKB"/>
</dbReference>
<dbReference type="GO" id="GO:0036503">
    <property type="term" value="P:ERAD pathway"/>
    <property type="evidence" value="ECO:0000315"/>
    <property type="project" value="UniProtKB"/>
</dbReference>
<dbReference type="GO" id="GO:0016236">
    <property type="term" value="P:macroautophagy"/>
    <property type="evidence" value="ECO:0000315"/>
    <property type="project" value="UniProtKB"/>
</dbReference>
<dbReference type="GO" id="GO:1904153">
    <property type="term" value="P:negative regulation of retrograde protein transport, ER to cytosol"/>
    <property type="evidence" value="ECO:0000315"/>
    <property type="project" value="ParkinsonsUK-UCL"/>
</dbReference>
<dbReference type="GO" id="GO:0035871">
    <property type="term" value="P:protein K11-linked deubiquitination"/>
    <property type="evidence" value="ECO:0000314"/>
    <property type="project" value="UniProtKB"/>
</dbReference>
<dbReference type="GO" id="GO:1990167">
    <property type="term" value="P:protein K27-linked deubiquitination"/>
    <property type="evidence" value="ECO:0000314"/>
    <property type="project" value="UniProtKB"/>
</dbReference>
<dbReference type="GO" id="GO:0035523">
    <property type="term" value="P:protein K29-linked deubiquitination"/>
    <property type="evidence" value="ECO:0000314"/>
    <property type="project" value="UniProtKB"/>
</dbReference>
<dbReference type="GO" id="GO:1990168">
    <property type="term" value="P:protein K33-linked deubiquitination"/>
    <property type="evidence" value="ECO:0000314"/>
    <property type="project" value="UniProtKB"/>
</dbReference>
<dbReference type="GO" id="GO:0071108">
    <property type="term" value="P:protein K48-linked deubiquitination"/>
    <property type="evidence" value="ECO:0000314"/>
    <property type="project" value="UniProtKB"/>
</dbReference>
<dbReference type="GO" id="GO:0070536">
    <property type="term" value="P:protein K63-linked deubiquitination"/>
    <property type="evidence" value="ECO:0000314"/>
    <property type="project" value="UniProtKB"/>
</dbReference>
<dbReference type="CDD" id="cd22745">
    <property type="entry name" value="OTU_OTU1"/>
    <property type="match status" value="1"/>
</dbReference>
<dbReference type="CDD" id="cd17059">
    <property type="entry name" value="Ubl_OTU1"/>
    <property type="match status" value="1"/>
</dbReference>
<dbReference type="FunFam" id="3.10.20.90:FF:000096">
    <property type="entry name" value="Ubiquitin thioesterase OTU1"/>
    <property type="match status" value="1"/>
</dbReference>
<dbReference type="FunFam" id="3.90.70.80:FF:000006">
    <property type="entry name" value="Ubiquitin thioesterase OTU1"/>
    <property type="match status" value="1"/>
</dbReference>
<dbReference type="Gene3D" id="3.90.70.80">
    <property type="match status" value="1"/>
</dbReference>
<dbReference type="Gene3D" id="3.10.20.90">
    <property type="entry name" value="Phosphatidylinositol 3-kinase Catalytic Subunit, Chain A, domain 1"/>
    <property type="match status" value="1"/>
</dbReference>
<dbReference type="InterPro" id="IPR048857">
    <property type="entry name" value="OTU1_Ubl"/>
</dbReference>
<dbReference type="InterPro" id="IPR003323">
    <property type="entry name" value="OTU_dom"/>
</dbReference>
<dbReference type="InterPro" id="IPR038765">
    <property type="entry name" value="Papain-like_cys_pep_sf"/>
</dbReference>
<dbReference type="InterPro" id="IPR029071">
    <property type="entry name" value="Ubiquitin-like_domsf"/>
</dbReference>
<dbReference type="InterPro" id="IPR013087">
    <property type="entry name" value="Znf_C2H2_type"/>
</dbReference>
<dbReference type="PANTHER" id="PTHR13312">
    <property type="entry name" value="HIV-INDUCED PROTEIN-7-LIKE PROTEASE"/>
    <property type="match status" value="1"/>
</dbReference>
<dbReference type="PANTHER" id="PTHR13312:SF0">
    <property type="entry name" value="UBIQUITIN THIOESTERASE OTU1"/>
    <property type="match status" value="1"/>
</dbReference>
<dbReference type="Pfam" id="PF02338">
    <property type="entry name" value="OTU"/>
    <property type="match status" value="1"/>
</dbReference>
<dbReference type="Pfam" id="PF21403">
    <property type="entry name" value="OTU1_UBXL"/>
    <property type="match status" value="1"/>
</dbReference>
<dbReference type="Pfam" id="PF24560">
    <property type="entry name" value="zf-C2H2_OTU1_C"/>
    <property type="match status" value="1"/>
</dbReference>
<dbReference type="SUPFAM" id="SSF54001">
    <property type="entry name" value="Cysteine proteinases"/>
    <property type="match status" value="1"/>
</dbReference>
<dbReference type="SUPFAM" id="SSF54236">
    <property type="entry name" value="Ubiquitin-like"/>
    <property type="match status" value="1"/>
</dbReference>
<dbReference type="PROSITE" id="PS50802">
    <property type="entry name" value="OTU"/>
    <property type="match status" value="1"/>
</dbReference>
<dbReference type="PROSITE" id="PS00028">
    <property type="entry name" value="ZINC_FINGER_C2H2_1"/>
    <property type="match status" value="1"/>
</dbReference>
<proteinExistence type="evidence at protein level"/>
<accession>Q5VVQ6</accession>
<accession>B2RNX3</accession>
<accession>Q5VVQ5</accession>
<accession>Q6ZRS6</accession>
<accession>Q86T63</accession>
<accession>Q9P1L8</accession>
<sequence>MFGPAKGRHFGVHPAPGFPGGVSQQAAGTKAGPAGAWPVGSRTDTMWRLRCKAKDGTHVLQGLSSRTRVRELQGQIAAITGIAPGGQRILVGYPPECLDLSNGDTILEDLPIQSGDMLIIEEDQTRPRSSPAFTKRGASSYVRETLPVLTRTVVPADNSCLFTSVYYVVEGGVLNPACAPEMRRLIAQIVASDPDFYSEAILGKTNQEYCDWIKRDDTWGGAIEISILSKFYQCEICVVDTQTVRIDRFGEDAGYTKRVLLIYDGIHYDPLQRNFPDPDTPPLTIFSSNDDIVLVQALELADEARRRRQFTDVNRFTLRCMVCQKGLTGQAEAREHAKETGHTNFGEV</sequence>
<keyword id="KW-0002">3D-structure</keyword>
<keyword id="KW-0025">Alternative splicing</keyword>
<keyword id="KW-0963">Cytoplasm</keyword>
<keyword id="KW-0378">Hydrolase</keyword>
<keyword id="KW-0479">Metal-binding</keyword>
<keyword id="KW-0645">Protease</keyword>
<keyword id="KW-1267">Proteomics identification</keyword>
<keyword id="KW-1185">Reference proteome</keyword>
<keyword id="KW-0788">Thiol protease</keyword>
<keyword id="KW-0833">Ubl conjugation pathway</keyword>
<keyword id="KW-0834">Unfolded protein response</keyword>
<keyword id="KW-0862">Zinc</keyword>
<keyword id="KW-0863">Zinc-finger</keyword>
<comment type="function">
    <text evidence="5 6 7">Hydrolase that can remove conjugated ubiquitin from proteins and participates in endoplasmic reticulum-associated degradation (ERAD) for misfolded lumenal proteins. May act by triming the ubiquitin chain on the associated substrate to facilitate their threading through the VCP/p97 pore. Ubiquitin moieties on substrates may present a steric impediment to the threading process when the substrate is transferred to the VCP pore and threaded through VCP's axial channel. Mediates deubiquitination of 'Lys-27'-, 'Lys-29'- and 'Lys-33'-linked polyubiquitin chains. Also able to hydrolyze 'Lys-11'-linked ubiquitin chains. Cleaves both polyubiquitin and di-ubiquitin. May play a role in macroautophagy, regulating for instance the clearance of damaged lysosomes. May recruit PLAA, UBXN6 and VCP to damaged lysosome membranes decorated with K48-linked ubiquitin chains and remove these chains allowing autophagosome formation (PubMed:27753622).</text>
</comment>
<comment type="catalytic activity">
    <reaction evidence="5 6">
        <text>Thiol-dependent hydrolysis of ester, thioester, amide, peptide and isopeptide bonds formed by the C-terminal Gly of ubiquitin (a 76-residue protein attached to proteins as an intracellular targeting signal).</text>
        <dbReference type="EC" id="3.4.19.12"/>
    </reaction>
</comment>
<comment type="subunit">
    <text evidence="5 6 7">Interacts with VCP; the interaction is direct. Interacts with FAF2/UBXD8. Interacts with DERL1; however interaction is dependent on the UBAX-like region, suggesting that it may be indirect. Interacts with PLAA, UBXN6 and VCP; may form a complex involved in macroautophagy (PubMed:27753622).</text>
</comment>
<comment type="interaction">
    <interactant intactId="EBI-2510804">
        <id>Q5VVQ6</id>
    </interactant>
    <interactant intactId="EBI-724310">
        <id>Q15038</id>
        <label>DAZAP2</label>
    </interactant>
    <organismsDiffer>false</organismsDiffer>
    <experiments>7</experiments>
</comment>
<comment type="interaction">
    <interactant intactId="EBI-2510804">
        <id>Q5VVQ6</id>
    </interactant>
    <interactant intactId="EBI-742054">
        <id>Q96D03</id>
        <label>DDIT4L</label>
    </interactant>
    <organismsDiffer>false</organismsDiffer>
    <experiments>3</experiments>
</comment>
<comment type="interaction">
    <interactant intactId="EBI-2510804">
        <id>Q5VVQ6</id>
    </interactant>
    <interactant intactId="EBI-11978259">
        <id>Q92567-2</id>
        <label>FAM168A</label>
    </interactant>
    <organismsDiffer>false</organismsDiffer>
    <experiments>5</experiments>
</comment>
<comment type="interaction">
    <interactant intactId="EBI-2510804">
        <id>Q5VVQ6</id>
    </interactant>
    <interactant intactId="EBI-6509505">
        <id>Q0VD86</id>
        <label>INCA1</label>
    </interactant>
    <organismsDiffer>false</organismsDiffer>
    <experiments>3</experiments>
</comment>
<comment type="interaction">
    <interactant intactId="EBI-2510804">
        <id>Q5VVQ6</id>
    </interactant>
    <interactant intactId="EBI-11959475">
        <id>P25791-3</id>
        <label>LMO2</label>
    </interactant>
    <organismsDiffer>false</organismsDiffer>
    <experiments>3</experiments>
</comment>
<comment type="interaction">
    <interactant intactId="EBI-2510804">
        <id>Q5VVQ6</id>
    </interactant>
    <interactant intactId="EBI-373524">
        <id>Q9UHC7</id>
        <label>MKRN1</label>
    </interactant>
    <organismsDiffer>false</organismsDiffer>
    <experiments>5</experiments>
</comment>
<comment type="interaction">
    <interactant intactId="EBI-2510804">
        <id>Q5VVQ6</id>
    </interactant>
    <interactant intactId="EBI-2683432">
        <id>Q9NPE2</id>
        <label>NGRN</label>
    </interactant>
    <organismsDiffer>false</organismsDiffer>
    <experiments>3</experiments>
</comment>
<comment type="interaction">
    <interactant intactId="EBI-2510804">
        <id>Q5VVQ6</id>
    </interactant>
    <interactant intactId="EBI-373552">
        <id>Q96CS7</id>
        <label>PLEKHB2</label>
    </interactant>
    <organismsDiffer>false</organismsDiffer>
    <experiments>5</experiments>
</comment>
<comment type="interaction">
    <interactant intactId="EBI-2510804">
        <id>Q5VVQ6</id>
    </interactant>
    <interactant intactId="EBI-769257">
        <id>Q9NRQ2</id>
        <label>PLSCR4</label>
    </interactant>
    <organismsDiffer>false</organismsDiffer>
    <experiments>3</experiments>
</comment>
<comment type="interaction">
    <interactant intactId="EBI-2510804">
        <id>Q5VVQ6</id>
    </interactant>
    <interactant intactId="EBI-603272">
        <id>O14818</id>
        <label>PSMA7</label>
    </interactant>
    <organismsDiffer>false</organismsDiffer>
    <experiments>5</experiments>
</comment>
<comment type="interaction">
    <interactant intactId="EBI-2510804">
        <id>Q5VVQ6</id>
    </interactant>
    <interactant intactId="EBI-12936957">
        <id>P35250-2</id>
        <label>RFC2</label>
    </interactant>
    <organismsDiffer>false</organismsDiffer>
    <experiments>3</experiments>
</comment>
<comment type="interaction">
    <interactant intactId="EBI-2510804">
        <id>Q5VVQ6</id>
    </interactant>
    <interactant intactId="EBI-723313">
        <id>Q9NWF9</id>
        <label>RNF216</label>
    </interactant>
    <organismsDiffer>false</organismsDiffer>
    <experiments>3</experiments>
</comment>
<comment type="interaction">
    <interactant intactId="EBI-2510804">
        <id>Q5VVQ6</id>
    </interactant>
    <interactant intactId="EBI-348482">
        <id>Q99942</id>
        <label>RNF5</label>
    </interactant>
    <organismsDiffer>false</organismsDiffer>
    <experiments>3</experiments>
</comment>
<comment type="interaction">
    <interactant intactId="EBI-2510804">
        <id>Q5VVQ6</id>
    </interactant>
    <interactant intactId="EBI-2643803">
        <id>Q8N0X7</id>
        <label>SPART</label>
    </interactant>
    <organismsDiffer>false</organismsDiffer>
    <experiments>3</experiments>
</comment>
<comment type="interaction">
    <interactant intactId="EBI-2510804">
        <id>Q5VVQ6</id>
    </interactant>
    <interactant intactId="EBI-6427217">
        <id>Q9Y458</id>
        <label>TBX22</label>
    </interactant>
    <organismsDiffer>false</organismsDiffer>
    <experiments>3</experiments>
</comment>
<comment type="interaction">
    <interactant intactId="EBI-2510804">
        <id>Q5VVQ6</id>
    </interactant>
    <interactant intactId="EBI-11952721">
        <id>Q05BL1</id>
        <label>TP53BP2</label>
    </interactant>
    <organismsDiffer>false</organismsDiffer>
    <experiments>3</experiments>
</comment>
<comment type="interaction">
    <interactant intactId="EBI-2510804">
        <id>Q5VVQ6</id>
    </interactant>
    <interactant intactId="EBI-359276">
        <id>Q9Y4K3</id>
        <label>TRAF6</label>
    </interactant>
    <organismsDiffer>false</organismsDiffer>
    <experiments>5</experiments>
</comment>
<comment type="interaction">
    <interactant intactId="EBI-2510804">
        <id>Q5VVQ6</id>
    </interactant>
    <interactant intactId="EBI-2340370">
        <id>Q9BZR9</id>
        <label>TRIM8</label>
    </interactant>
    <organismsDiffer>false</organismsDiffer>
    <experiments>3</experiments>
</comment>
<comment type="interaction">
    <interactant intactId="EBI-2510804">
        <id>Q5VVQ6</id>
    </interactant>
    <interactant intactId="EBI-3390054">
        <id>P0CG48</id>
        <label>UBC</label>
    </interactant>
    <organismsDiffer>false</organismsDiffer>
    <experiments>3</experiments>
</comment>
<comment type="interaction">
    <interactant intactId="EBI-2510804">
        <id>Q5VVQ6</id>
    </interactant>
    <interactant intactId="EBI-1993899">
        <id>Q9BZV1</id>
        <label>UBXN6</label>
    </interactant>
    <organismsDiffer>false</organismsDiffer>
    <experiments>3</experiments>
</comment>
<comment type="interaction">
    <interactant intactId="EBI-2510804">
        <id>Q5VVQ6</id>
    </interactant>
    <interactant intactId="EBI-355164">
        <id>P55072</id>
        <label>VCP</label>
    </interactant>
    <organismsDiffer>false</organismsDiffer>
    <experiments>3</experiments>
</comment>
<comment type="interaction">
    <interactant intactId="EBI-2510804">
        <id>Q5VVQ6</id>
    </interactant>
    <interactant intactId="EBI-12879708">
        <id>Q9NU63-3</id>
        <label>ZFP57</label>
    </interactant>
    <organismsDiffer>false</organismsDiffer>
    <experiments>3</experiments>
</comment>
<comment type="subcellular location">
    <subcellularLocation>
        <location evidence="7">Cytoplasm</location>
    </subcellularLocation>
    <text evidence="7">Recruited to damaged lysosomes decorated with K48-linked ubiquitin chains.</text>
</comment>
<comment type="alternative products">
    <event type="alternative splicing"/>
    <isoform>
        <id>Q5VVQ6-1</id>
        <name>1</name>
        <sequence type="displayed"/>
    </isoform>
    <isoform>
        <id>Q5VVQ6-2</id>
        <name>2</name>
        <sequence type="described" ref="VSP_024122"/>
    </isoform>
</comment>
<comment type="domain">
    <text>The UBAX-like region mediates the interaction with VCP. According to PubMed:19818707, it corresponds to a UBX domain, which is a hallmark for VCP-associated proteins. However, no canonical UBX is detected by prediction tools such as Pfam or PROSITE.</text>
</comment>
<comment type="domain">
    <text evidence="6">The C2H2-type zinc finger mediates specificity for 'Lys-27'-, 'Lys-29'- and 'Lys-33'-linked polyubiquitin chains but not for 'Lys-11'-linked ubiquitin chains. Selectivity for 'Lys-11'-linked ubiquitin chains is provided by recognition of the sequence surrounding 'Lys-11' in ubiquitin. The S2 site region provides specificity for longer 'Lys-11'-linked ubiquitin chains (PubMed:23827681).</text>
</comment>
<comment type="sequence caution" evidence="9">
    <conflict type="erroneous translation">
        <sequence resource="EMBL-CDS" id="AAF71033"/>
    </conflict>
    <text>Wrong choice of frame.</text>
</comment>
<comment type="sequence caution" evidence="9">
    <conflict type="erroneous gene model prediction">
        <sequence resource="EMBL-CDS" id="EAW93510"/>
    </conflict>
</comment>